<accession>Q3SGT1</accession>
<proteinExistence type="inferred from homology"/>
<evidence type="ECO:0000255" key="1">
    <source>
        <dbReference type="HAMAP-Rule" id="MF_00031"/>
    </source>
</evidence>
<organism>
    <name type="scientific">Thiobacillus denitrificans (strain ATCC 25259 / T1)</name>
    <dbReference type="NCBI Taxonomy" id="292415"/>
    <lineage>
        <taxon>Bacteria</taxon>
        <taxon>Pseudomonadati</taxon>
        <taxon>Pseudomonadota</taxon>
        <taxon>Betaproteobacteria</taxon>
        <taxon>Nitrosomonadales</taxon>
        <taxon>Thiobacillaceae</taxon>
        <taxon>Thiobacillus</taxon>
    </lineage>
</organism>
<name>RUVA_THIDA</name>
<feature type="chain" id="PRO_0000224920" description="Holliday junction branch migration complex subunit RuvA">
    <location>
        <begin position="1"/>
        <end position="191"/>
    </location>
</feature>
<feature type="region of interest" description="Domain I" evidence="1">
    <location>
        <begin position="1"/>
        <end position="64"/>
    </location>
</feature>
<feature type="region of interest" description="Domain II" evidence="1">
    <location>
        <begin position="65"/>
        <end position="138"/>
    </location>
</feature>
<feature type="region of interest" description="Flexible linker" evidence="1">
    <location>
        <begin position="138"/>
        <end position="141"/>
    </location>
</feature>
<feature type="region of interest" description="Domain III" evidence="1">
    <location>
        <begin position="142"/>
        <end position="191"/>
    </location>
</feature>
<sequence>MIGRITGTLAAKQPPQVLVDVNGVCYEIDVPMSTFYNLPGIGEKVALLTHLAIREDAHLLYGFGSEVERAAFRELLKVSGIGAKTALSVLSGLSVNDLSAAIAAQEIGRIVKVPGIGKKTAERLLLELKGKPVFAGALASVPSAGASDDVRQALLALGYNERETAATVRELPAGLAVGEAIRQALRALSRA</sequence>
<dbReference type="EMBL" id="CP000116">
    <property type="protein sequence ID" value="AAZ98166.1"/>
    <property type="molecule type" value="Genomic_DNA"/>
</dbReference>
<dbReference type="RefSeq" id="WP_011312725.1">
    <property type="nucleotide sequence ID" value="NC_007404.1"/>
</dbReference>
<dbReference type="SMR" id="Q3SGT1"/>
<dbReference type="STRING" id="292415.Tbd_2213"/>
<dbReference type="KEGG" id="tbd:Tbd_2213"/>
<dbReference type="eggNOG" id="COG0632">
    <property type="taxonomic scope" value="Bacteria"/>
</dbReference>
<dbReference type="HOGENOM" id="CLU_087936_0_0_4"/>
<dbReference type="OrthoDB" id="5293449at2"/>
<dbReference type="Proteomes" id="UP000008291">
    <property type="component" value="Chromosome"/>
</dbReference>
<dbReference type="GO" id="GO:0005737">
    <property type="term" value="C:cytoplasm"/>
    <property type="evidence" value="ECO:0007669"/>
    <property type="project" value="UniProtKB-SubCell"/>
</dbReference>
<dbReference type="GO" id="GO:0009379">
    <property type="term" value="C:Holliday junction helicase complex"/>
    <property type="evidence" value="ECO:0007669"/>
    <property type="project" value="InterPro"/>
</dbReference>
<dbReference type="GO" id="GO:0048476">
    <property type="term" value="C:Holliday junction resolvase complex"/>
    <property type="evidence" value="ECO:0007669"/>
    <property type="project" value="UniProtKB-UniRule"/>
</dbReference>
<dbReference type="GO" id="GO:0005524">
    <property type="term" value="F:ATP binding"/>
    <property type="evidence" value="ECO:0007669"/>
    <property type="project" value="InterPro"/>
</dbReference>
<dbReference type="GO" id="GO:0000400">
    <property type="term" value="F:four-way junction DNA binding"/>
    <property type="evidence" value="ECO:0007669"/>
    <property type="project" value="UniProtKB-UniRule"/>
</dbReference>
<dbReference type="GO" id="GO:0009378">
    <property type="term" value="F:four-way junction helicase activity"/>
    <property type="evidence" value="ECO:0007669"/>
    <property type="project" value="InterPro"/>
</dbReference>
<dbReference type="GO" id="GO:0006310">
    <property type="term" value="P:DNA recombination"/>
    <property type="evidence" value="ECO:0007669"/>
    <property type="project" value="UniProtKB-UniRule"/>
</dbReference>
<dbReference type="GO" id="GO:0006281">
    <property type="term" value="P:DNA repair"/>
    <property type="evidence" value="ECO:0007669"/>
    <property type="project" value="UniProtKB-UniRule"/>
</dbReference>
<dbReference type="CDD" id="cd14332">
    <property type="entry name" value="UBA_RuvA_C"/>
    <property type="match status" value="1"/>
</dbReference>
<dbReference type="Gene3D" id="1.10.150.20">
    <property type="entry name" value="5' to 3' exonuclease, C-terminal subdomain"/>
    <property type="match status" value="1"/>
</dbReference>
<dbReference type="Gene3D" id="1.10.8.10">
    <property type="entry name" value="DNA helicase RuvA subunit, C-terminal domain"/>
    <property type="match status" value="1"/>
</dbReference>
<dbReference type="Gene3D" id="2.40.50.140">
    <property type="entry name" value="Nucleic acid-binding proteins"/>
    <property type="match status" value="1"/>
</dbReference>
<dbReference type="HAMAP" id="MF_00031">
    <property type="entry name" value="DNA_HJ_migration_RuvA"/>
    <property type="match status" value="1"/>
</dbReference>
<dbReference type="InterPro" id="IPR013849">
    <property type="entry name" value="DNA_helicase_Holl-junc_RuvA_I"/>
</dbReference>
<dbReference type="InterPro" id="IPR003583">
    <property type="entry name" value="Hlx-hairpin-Hlx_DNA-bd_motif"/>
</dbReference>
<dbReference type="InterPro" id="IPR012340">
    <property type="entry name" value="NA-bd_OB-fold"/>
</dbReference>
<dbReference type="InterPro" id="IPR000085">
    <property type="entry name" value="RuvA"/>
</dbReference>
<dbReference type="InterPro" id="IPR010994">
    <property type="entry name" value="RuvA_2-like"/>
</dbReference>
<dbReference type="InterPro" id="IPR011114">
    <property type="entry name" value="RuvA_C"/>
</dbReference>
<dbReference type="InterPro" id="IPR036267">
    <property type="entry name" value="RuvA_C_sf"/>
</dbReference>
<dbReference type="NCBIfam" id="TIGR00084">
    <property type="entry name" value="ruvA"/>
    <property type="match status" value="1"/>
</dbReference>
<dbReference type="Pfam" id="PF14520">
    <property type="entry name" value="HHH_5"/>
    <property type="match status" value="1"/>
</dbReference>
<dbReference type="Pfam" id="PF07499">
    <property type="entry name" value="RuvA_C"/>
    <property type="match status" value="1"/>
</dbReference>
<dbReference type="Pfam" id="PF01330">
    <property type="entry name" value="RuvA_N"/>
    <property type="match status" value="1"/>
</dbReference>
<dbReference type="SMART" id="SM00278">
    <property type="entry name" value="HhH1"/>
    <property type="match status" value="3"/>
</dbReference>
<dbReference type="SUPFAM" id="SSF46929">
    <property type="entry name" value="DNA helicase RuvA subunit, C-terminal domain"/>
    <property type="match status" value="1"/>
</dbReference>
<dbReference type="SUPFAM" id="SSF50249">
    <property type="entry name" value="Nucleic acid-binding proteins"/>
    <property type="match status" value="1"/>
</dbReference>
<dbReference type="SUPFAM" id="SSF47781">
    <property type="entry name" value="RuvA domain 2-like"/>
    <property type="match status" value="1"/>
</dbReference>
<protein>
    <recommendedName>
        <fullName evidence="1">Holliday junction branch migration complex subunit RuvA</fullName>
    </recommendedName>
</protein>
<gene>
    <name evidence="1" type="primary">ruvA</name>
    <name type="ordered locus">Tbd_2213</name>
</gene>
<keyword id="KW-0963">Cytoplasm</keyword>
<keyword id="KW-0227">DNA damage</keyword>
<keyword id="KW-0233">DNA recombination</keyword>
<keyword id="KW-0234">DNA repair</keyword>
<keyword id="KW-0238">DNA-binding</keyword>
<keyword id="KW-1185">Reference proteome</keyword>
<comment type="function">
    <text evidence="1">The RuvA-RuvB-RuvC complex processes Holliday junction (HJ) DNA during genetic recombination and DNA repair, while the RuvA-RuvB complex plays an important role in the rescue of blocked DNA replication forks via replication fork reversal (RFR). RuvA specifically binds to HJ cruciform DNA, conferring on it an open structure. The RuvB hexamer acts as an ATP-dependent pump, pulling dsDNA into and through the RuvAB complex. HJ branch migration allows RuvC to scan DNA until it finds its consensus sequence, where it cleaves and resolves the cruciform DNA.</text>
</comment>
<comment type="subunit">
    <text evidence="1">Homotetramer. Forms an RuvA(8)-RuvB(12)-Holliday junction (HJ) complex. HJ DNA is sandwiched between 2 RuvA tetramers; dsDNA enters through RuvA and exits via RuvB. An RuvB hexamer assembles on each DNA strand where it exits the tetramer. Each RuvB hexamer is contacted by two RuvA subunits (via domain III) on 2 adjacent RuvB subunits; this complex drives branch migration. In the full resolvosome a probable DNA-RuvA(4)-RuvB(12)-RuvC(2) complex forms which resolves the HJ.</text>
</comment>
<comment type="subcellular location">
    <subcellularLocation>
        <location evidence="1">Cytoplasm</location>
    </subcellularLocation>
</comment>
<comment type="domain">
    <text evidence="1">Has three domains with a flexible linker between the domains II and III and assumes an 'L' shape. Domain III is highly mobile and contacts RuvB.</text>
</comment>
<comment type="similarity">
    <text evidence="1">Belongs to the RuvA family.</text>
</comment>
<reference key="1">
    <citation type="journal article" date="2006" name="J. Bacteriol.">
        <title>The genome sequence of the obligately chemolithoautotrophic, facultatively anaerobic bacterium Thiobacillus denitrificans.</title>
        <authorList>
            <person name="Beller H.R."/>
            <person name="Chain P.S."/>
            <person name="Letain T.E."/>
            <person name="Chakicherla A."/>
            <person name="Larimer F.W."/>
            <person name="Richardson P.M."/>
            <person name="Coleman M.A."/>
            <person name="Wood A.P."/>
            <person name="Kelly D.P."/>
        </authorList>
    </citation>
    <scope>NUCLEOTIDE SEQUENCE [LARGE SCALE GENOMIC DNA]</scope>
    <source>
        <strain>ATCC 25259 / T1</strain>
    </source>
</reference>